<evidence type="ECO:0000255" key="1">
    <source>
        <dbReference type="HAMAP-Rule" id="MF_00531"/>
    </source>
</evidence>
<evidence type="ECO:0000305" key="2"/>
<dbReference type="EMBL" id="BX571965">
    <property type="protein sequence ID" value="CAH37220.1"/>
    <property type="molecule type" value="Genomic_DNA"/>
</dbReference>
<dbReference type="RefSeq" id="WP_004199273.1">
    <property type="nucleotide sequence ID" value="NZ_CP009538.1"/>
</dbReference>
<dbReference type="RefSeq" id="YP_109803.1">
    <property type="nucleotide sequence ID" value="NC_006350.1"/>
</dbReference>
<dbReference type="SMR" id="Q63Q15"/>
<dbReference type="STRING" id="272560.BPSL3209"/>
<dbReference type="GeneID" id="98107156"/>
<dbReference type="KEGG" id="bps:BPSL3209"/>
<dbReference type="PATRIC" id="fig|272560.51.peg.2029"/>
<dbReference type="eggNOG" id="COG0185">
    <property type="taxonomic scope" value="Bacteria"/>
</dbReference>
<dbReference type="PRO" id="PR:Q63Q15"/>
<dbReference type="Proteomes" id="UP000000605">
    <property type="component" value="Chromosome 1"/>
</dbReference>
<dbReference type="GO" id="GO:0005737">
    <property type="term" value="C:cytoplasm"/>
    <property type="evidence" value="ECO:0007669"/>
    <property type="project" value="UniProtKB-ARBA"/>
</dbReference>
<dbReference type="GO" id="GO:0015935">
    <property type="term" value="C:small ribosomal subunit"/>
    <property type="evidence" value="ECO:0007669"/>
    <property type="project" value="InterPro"/>
</dbReference>
<dbReference type="GO" id="GO:0019843">
    <property type="term" value="F:rRNA binding"/>
    <property type="evidence" value="ECO:0007669"/>
    <property type="project" value="UniProtKB-UniRule"/>
</dbReference>
<dbReference type="GO" id="GO:0003735">
    <property type="term" value="F:structural constituent of ribosome"/>
    <property type="evidence" value="ECO:0007669"/>
    <property type="project" value="InterPro"/>
</dbReference>
<dbReference type="GO" id="GO:0000028">
    <property type="term" value="P:ribosomal small subunit assembly"/>
    <property type="evidence" value="ECO:0007669"/>
    <property type="project" value="TreeGrafter"/>
</dbReference>
<dbReference type="GO" id="GO:0006412">
    <property type="term" value="P:translation"/>
    <property type="evidence" value="ECO:0007669"/>
    <property type="project" value="UniProtKB-UniRule"/>
</dbReference>
<dbReference type="FunFam" id="3.30.860.10:FF:000001">
    <property type="entry name" value="30S ribosomal protein S19"/>
    <property type="match status" value="1"/>
</dbReference>
<dbReference type="Gene3D" id="3.30.860.10">
    <property type="entry name" value="30s Ribosomal Protein S19, Chain A"/>
    <property type="match status" value="1"/>
</dbReference>
<dbReference type="HAMAP" id="MF_00531">
    <property type="entry name" value="Ribosomal_uS19"/>
    <property type="match status" value="1"/>
</dbReference>
<dbReference type="InterPro" id="IPR002222">
    <property type="entry name" value="Ribosomal_uS19"/>
</dbReference>
<dbReference type="InterPro" id="IPR005732">
    <property type="entry name" value="Ribosomal_uS19_bac-type"/>
</dbReference>
<dbReference type="InterPro" id="IPR020934">
    <property type="entry name" value="Ribosomal_uS19_CS"/>
</dbReference>
<dbReference type="InterPro" id="IPR023575">
    <property type="entry name" value="Ribosomal_uS19_SF"/>
</dbReference>
<dbReference type="NCBIfam" id="TIGR01050">
    <property type="entry name" value="rpsS_bact"/>
    <property type="match status" value="1"/>
</dbReference>
<dbReference type="PANTHER" id="PTHR11880">
    <property type="entry name" value="RIBOSOMAL PROTEIN S19P FAMILY MEMBER"/>
    <property type="match status" value="1"/>
</dbReference>
<dbReference type="PANTHER" id="PTHR11880:SF8">
    <property type="entry name" value="SMALL RIBOSOMAL SUBUNIT PROTEIN US19M"/>
    <property type="match status" value="1"/>
</dbReference>
<dbReference type="Pfam" id="PF00203">
    <property type="entry name" value="Ribosomal_S19"/>
    <property type="match status" value="1"/>
</dbReference>
<dbReference type="PIRSF" id="PIRSF002144">
    <property type="entry name" value="Ribosomal_S19"/>
    <property type="match status" value="1"/>
</dbReference>
<dbReference type="PRINTS" id="PR00975">
    <property type="entry name" value="RIBOSOMALS19"/>
</dbReference>
<dbReference type="SUPFAM" id="SSF54570">
    <property type="entry name" value="Ribosomal protein S19"/>
    <property type="match status" value="1"/>
</dbReference>
<dbReference type="PROSITE" id="PS00323">
    <property type="entry name" value="RIBOSOMAL_S19"/>
    <property type="match status" value="1"/>
</dbReference>
<comment type="function">
    <text evidence="1">Protein S19 forms a complex with S13 that binds strongly to the 16S ribosomal RNA.</text>
</comment>
<comment type="similarity">
    <text evidence="1">Belongs to the universal ribosomal protein uS19 family.</text>
</comment>
<organism>
    <name type="scientific">Burkholderia pseudomallei (strain K96243)</name>
    <dbReference type="NCBI Taxonomy" id="272560"/>
    <lineage>
        <taxon>Bacteria</taxon>
        <taxon>Pseudomonadati</taxon>
        <taxon>Pseudomonadota</taxon>
        <taxon>Betaproteobacteria</taxon>
        <taxon>Burkholderiales</taxon>
        <taxon>Burkholderiaceae</taxon>
        <taxon>Burkholderia</taxon>
        <taxon>pseudomallei group</taxon>
    </lineage>
</organism>
<reference key="1">
    <citation type="journal article" date="2004" name="Proc. Natl. Acad. Sci. U.S.A.">
        <title>Genomic plasticity of the causative agent of melioidosis, Burkholderia pseudomallei.</title>
        <authorList>
            <person name="Holden M.T.G."/>
            <person name="Titball R.W."/>
            <person name="Peacock S.J."/>
            <person name="Cerdeno-Tarraga A.-M."/>
            <person name="Atkins T."/>
            <person name="Crossman L.C."/>
            <person name="Pitt T."/>
            <person name="Churcher C."/>
            <person name="Mungall K.L."/>
            <person name="Bentley S.D."/>
            <person name="Sebaihia M."/>
            <person name="Thomson N.R."/>
            <person name="Bason N."/>
            <person name="Beacham I.R."/>
            <person name="Brooks K."/>
            <person name="Brown K.A."/>
            <person name="Brown N.F."/>
            <person name="Challis G.L."/>
            <person name="Cherevach I."/>
            <person name="Chillingworth T."/>
            <person name="Cronin A."/>
            <person name="Crossett B."/>
            <person name="Davis P."/>
            <person name="DeShazer D."/>
            <person name="Feltwell T."/>
            <person name="Fraser A."/>
            <person name="Hance Z."/>
            <person name="Hauser H."/>
            <person name="Holroyd S."/>
            <person name="Jagels K."/>
            <person name="Keith K.E."/>
            <person name="Maddison M."/>
            <person name="Moule S."/>
            <person name="Price C."/>
            <person name="Quail M.A."/>
            <person name="Rabbinowitsch E."/>
            <person name="Rutherford K."/>
            <person name="Sanders M."/>
            <person name="Simmonds M."/>
            <person name="Songsivilai S."/>
            <person name="Stevens K."/>
            <person name="Tumapa S."/>
            <person name="Vesaratchavest M."/>
            <person name="Whitehead S."/>
            <person name="Yeats C."/>
            <person name="Barrell B.G."/>
            <person name="Oyston P.C.F."/>
            <person name="Parkhill J."/>
        </authorList>
    </citation>
    <scope>NUCLEOTIDE SEQUENCE [LARGE SCALE GENOMIC DNA]</scope>
    <source>
        <strain>K96243</strain>
    </source>
</reference>
<accession>Q63Q15</accession>
<protein>
    <recommendedName>
        <fullName evidence="1">Small ribosomal subunit protein uS19</fullName>
    </recommendedName>
    <alternativeName>
        <fullName evidence="2">30S ribosomal protein S19</fullName>
    </alternativeName>
</protein>
<name>RS19_BURPS</name>
<sequence>MARSVKKGPFCDAHLLKKVEAAAASRDKKPIKTWSRRSTILPDFIGLTIAVHNGRQHVPVYISENMVGHKLGEFALTRTFKGHAADKKAKK</sequence>
<feature type="chain" id="PRO_0000129798" description="Small ribosomal subunit protein uS19">
    <location>
        <begin position="1"/>
        <end position="91"/>
    </location>
</feature>
<keyword id="KW-1185">Reference proteome</keyword>
<keyword id="KW-0687">Ribonucleoprotein</keyword>
<keyword id="KW-0689">Ribosomal protein</keyword>
<keyword id="KW-0694">RNA-binding</keyword>
<keyword id="KW-0699">rRNA-binding</keyword>
<proteinExistence type="inferred from homology"/>
<gene>
    <name evidence="1" type="primary">rpsS</name>
    <name type="ordered locus">BPSL3209</name>
</gene>